<evidence type="ECO:0000250" key="1"/>
<evidence type="ECO:0000255" key="2">
    <source>
        <dbReference type="PROSITE-ProRule" id="PRU00114"/>
    </source>
</evidence>
<evidence type="ECO:0000305" key="3"/>
<accession>P61771</accession>
<accession>P01884</accession>
<accession>Q9UDF4</accession>
<gene>
    <name type="primary">B2M</name>
</gene>
<comment type="function">
    <text evidence="1">Component of the class I major histocompatibility complex (MHC). Involved in the presentation of peptide antigens to the immune system (By similarity).</text>
</comment>
<comment type="subunit">
    <text evidence="1">Heterodimer of an alpha chain and a beta chain. Beta-2-microglobulin is the beta-chain of major histocompatibility complex class I molecules (By similarity).</text>
</comment>
<comment type="subcellular location">
    <subcellularLocation>
        <location evidence="1">Secreted</location>
    </subcellularLocation>
</comment>
<comment type="similarity">
    <text evidence="3">Belongs to the beta-2-microglobulin family.</text>
</comment>
<protein>
    <recommendedName>
        <fullName>Beta-2-microglobulin</fullName>
    </recommendedName>
</protein>
<feature type="signal peptide" evidence="1">
    <location>
        <begin position="1"/>
        <end position="20"/>
    </location>
</feature>
<feature type="chain" id="PRO_0000018777" description="Beta-2-microglobulin">
    <location>
        <begin position="21"/>
        <end position="119"/>
    </location>
</feature>
<feature type="domain" description="Ig-like C1-type">
    <location>
        <begin position="25"/>
        <end position="113"/>
    </location>
</feature>
<feature type="disulfide bond" evidence="2">
    <location>
        <begin position="45"/>
        <end position="100"/>
    </location>
</feature>
<sequence length="119" mass="13715">MSRSVALAVLALLSLSGLEAIQRTPKIQVYSRHPAENGKSNFLNCYVSGFHPSDIEVDLLKNGERIEKVEHSDLSFSKDWSFYLLYYTEFTPTEKDEYACRVNHVTLSQPKIVKWDRDM</sequence>
<name>B2MG_GORGO</name>
<keyword id="KW-1015">Disulfide bond</keyword>
<keyword id="KW-0391">Immunity</keyword>
<keyword id="KW-0393">Immunoglobulin domain</keyword>
<keyword id="KW-0490">MHC I</keyword>
<keyword id="KW-1185">Reference proteome</keyword>
<keyword id="KW-0964">Secreted</keyword>
<keyword id="KW-0732">Signal</keyword>
<proteinExistence type="inferred from homology"/>
<dbReference type="EMBL" id="M30684">
    <property type="protein sequence ID" value="AAA88008.1"/>
    <property type="molecule type" value="mRNA"/>
</dbReference>
<dbReference type="PIR" id="I37063">
    <property type="entry name" value="I37063"/>
</dbReference>
<dbReference type="RefSeq" id="XP_004056148.1">
    <property type="nucleotide sequence ID" value="XM_004056100.2"/>
</dbReference>
<dbReference type="BMRB" id="P61771"/>
<dbReference type="SMR" id="P61771"/>
<dbReference type="FunCoup" id="P61771">
    <property type="interactions" value="558"/>
</dbReference>
<dbReference type="STRING" id="9593.ENSGGOP00000026553"/>
<dbReference type="Ensembl" id="ENSGGOT00000023544.2">
    <property type="protein sequence ID" value="ENSGGOP00000026553.1"/>
    <property type="gene ID" value="ENSGGOG00000001602.3"/>
</dbReference>
<dbReference type="GeneID" id="101132159"/>
<dbReference type="KEGG" id="ggo:101132159"/>
<dbReference type="CTD" id="567"/>
<dbReference type="eggNOG" id="ENOG502S8GM">
    <property type="taxonomic scope" value="Eukaryota"/>
</dbReference>
<dbReference type="GeneTree" id="ENSGT00690000102227"/>
<dbReference type="HOGENOM" id="CLU_163066_0_0_1"/>
<dbReference type="InParanoid" id="P61771"/>
<dbReference type="OMA" id="WCVVLVW"/>
<dbReference type="Proteomes" id="UP000001519">
    <property type="component" value="Chromosome 15"/>
</dbReference>
<dbReference type="Bgee" id="ENSGGOG00000001602">
    <property type="expression patterns" value="Expressed in testis and 6 other cell types or tissues"/>
</dbReference>
<dbReference type="GO" id="GO:0005829">
    <property type="term" value="C:cytosol"/>
    <property type="evidence" value="ECO:0007669"/>
    <property type="project" value="Ensembl"/>
</dbReference>
<dbReference type="GO" id="GO:0009897">
    <property type="term" value="C:external side of plasma membrane"/>
    <property type="evidence" value="ECO:0007669"/>
    <property type="project" value="Ensembl"/>
</dbReference>
<dbReference type="GO" id="GO:0005576">
    <property type="term" value="C:extracellular region"/>
    <property type="evidence" value="ECO:0007669"/>
    <property type="project" value="UniProtKB-SubCell"/>
</dbReference>
<dbReference type="GO" id="GO:0005794">
    <property type="term" value="C:Golgi apparatus"/>
    <property type="evidence" value="ECO:0007669"/>
    <property type="project" value="Ensembl"/>
</dbReference>
<dbReference type="GO" id="GO:1990712">
    <property type="term" value="C:HFE-transferrin receptor complex"/>
    <property type="evidence" value="ECO:0007669"/>
    <property type="project" value="Ensembl"/>
</dbReference>
<dbReference type="GO" id="GO:0031902">
    <property type="term" value="C:late endosome membrane"/>
    <property type="evidence" value="ECO:0000318"/>
    <property type="project" value="GO_Central"/>
</dbReference>
<dbReference type="GO" id="GO:0005765">
    <property type="term" value="C:lysosomal membrane"/>
    <property type="evidence" value="ECO:0000318"/>
    <property type="project" value="GO_Central"/>
</dbReference>
<dbReference type="GO" id="GO:0042824">
    <property type="term" value="C:MHC class I peptide loading complex"/>
    <property type="evidence" value="ECO:0007669"/>
    <property type="project" value="Ensembl"/>
</dbReference>
<dbReference type="GO" id="GO:0042612">
    <property type="term" value="C:MHC class I protein complex"/>
    <property type="evidence" value="ECO:0007669"/>
    <property type="project" value="UniProtKB-KW"/>
</dbReference>
<dbReference type="GO" id="GO:0042613">
    <property type="term" value="C:MHC class II protein complex"/>
    <property type="evidence" value="ECO:0000318"/>
    <property type="project" value="GO_Central"/>
</dbReference>
<dbReference type="GO" id="GO:0023026">
    <property type="term" value="F:MHC class II protein complex binding"/>
    <property type="evidence" value="ECO:0000318"/>
    <property type="project" value="GO_Central"/>
</dbReference>
<dbReference type="GO" id="GO:0042605">
    <property type="term" value="F:peptide antigen binding"/>
    <property type="evidence" value="ECO:0000318"/>
    <property type="project" value="GO_Central"/>
</dbReference>
<dbReference type="GO" id="GO:0042803">
    <property type="term" value="F:protein homodimerization activity"/>
    <property type="evidence" value="ECO:0007669"/>
    <property type="project" value="Ensembl"/>
</dbReference>
<dbReference type="GO" id="GO:0005198">
    <property type="term" value="F:structural molecule activity"/>
    <property type="evidence" value="ECO:0007669"/>
    <property type="project" value="Ensembl"/>
</dbReference>
<dbReference type="GO" id="GO:1990000">
    <property type="term" value="P:amyloid fibril formation"/>
    <property type="evidence" value="ECO:0007669"/>
    <property type="project" value="Ensembl"/>
</dbReference>
<dbReference type="GO" id="GO:0019885">
    <property type="term" value="P:antigen processing and presentation of endogenous peptide antigen via MHC class I"/>
    <property type="evidence" value="ECO:0007669"/>
    <property type="project" value="Ensembl"/>
</dbReference>
<dbReference type="GO" id="GO:0019886">
    <property type="term" value="P:antigen processing and presentation of exogenous peptide antigen via MHC class II"/>
    <property type="evidence" value="ECO:0000318"/>
    <property type="project" value="GO_Central"/>
</dbReference>
<dbReference type="GO" id="GO:0002481">
    <property type="term" value="P:antigen processing and presentation of exogenous protein antigen via MHC class Ib, TAP-dependent"/>
    <property type="evidence" value="ECO:0007669"/>
    <property type="project" value="Ensembl"/>
</dbReference>
<dbReference type="GO" id="GO:0071283">
    <property type="term" value="P:cellular response to iron(III) ion"/>
    <property type="evidence" value="ECO:0007669"/>
    <property type="project" value="Ensembl"/>
</dbReference>
<dbReference type="GO" id="GO:0071316">
    <property type="term" value="P:cellular response to nicotine"/>
    <property type="evidence" value="ECO:0007669"/>
    <property type="project" value="Ensembl"/>
</dbReference>
<dbReference type="GO" id="GO:0006879">
    <property type="term" value="P:intracellular iron ion homeostasis"/>
    <property type="evidence" value="ECO:0007669"/>
    <property type="project" value="Ensembl"/>
</dbReference>
<dbReference type="GO" id="GO:0006826">
    <property type="term" value="P:iron ion transport"/>
    <property type="evidence" value="ECO:0007669"/>
    <property type="project" value="Ensembl"/>
</dbReference>
<dbReference type="GO" id="GO:0007611">
    <property type="term" value="P:learning or memory"/>
    <property type="evidence" value="ECO:0007669"/>
    <property type="project" value="Ensembl"/>
</dbReference>
<dbReference type="GO" id="GO:0060586">
    <property type="term" value="P:multicellular organismal-level iron ion homeostasis"/>
    <property type="evidence" value="ECO:0007669"/>
    <property type="project" value="Ensembl"/>
</dbReference>
<dbReference type="GO" id="GO:0050680">
    <property type="term" value="P:negative regulation of epithelial cell proliferation"/>
    <property type="evidence" value="ECO:0007669"/>
    <property type="project" value="Ensembl"/>
</dbReference>
<dbReference type="GO" id="GO:2000978">
    <property type="term" value="P:negative regulation of forebrain neuron differentiation"/>
    <property type="evidence" value="ECO:0007669"/>
    <property type="project" value="Ensembl"/>
</dbReference>
<dbReference type="GO" id="GO:0050768">
    <property type="term" value="P:negative regulation of neurogenesis"/>
    <property type="evidence" value="ECO:0007669"/>
    <property type="project" value="Ensembl"/>
</dbReference>
<dbReference type="GO" id="GO:0010977">
    <property type="term" value="P:negative regulation of neuron projection development"/>
    <property type="evidence" value="ECO:0007669"/>
    <property type="project" value="Ensembl"/>
</dbReference>
<dbReference type="GO" id="GO:0002502">
    <property type="term" value="P:peptide antigen assembly with MHC class I protein complex"/>
    <property type="evidence" value="ECO:0007669"/>
    <property type="project" value="Ensembl"/>
</dbReference>
<dbReference type="GO" id="GO:0002503">
    <property type="term" value="P:peptide antigen assembly with MHC class II protein complex"/>
    <property type="evidence" value="ECO:0000318"/>
    <property type="project" value="GO_Central"/>
</dbReference>
<dbReference type="GO" id="GO:2000774">
    <property type="term" value="P:positive regulation of cellular senescence"/>
    <property type="evidence" value="ECO:0007669"/>
    <property type="project" value="Ensembl"/>
</dbReference>
<dbReference type="GO" id="GO:0050778">
    <property type="term" value="P:positive regulation of immune response"/>
    <property type="evidence" value="ECO:0000318"/>
    <property type="project" value="GO_Central"/>
</dbReference>
<dbReference type="GO" id="GO:0048260">
    <property type="term" value="P:positive regulation of receptor-mediated endocytosis"/>
    <property type="evidence" value="ECO:0007669"/>
    <property type="project" value="Ensembl"/>
</dbReference>
<dbReference type="GO" id="GO:0050870">
    <property type="term" value="P:positive regulation of T cell activation"/>
    <property type="evidence" value="ECO:0000318"/>
    <property type="project" value="GO_Central"/>
</dbReference>
<dbReference type="GO" id="GO:0002726">
    <property type="term" value="P:positive regulation of T cell cytokine production"/>
    <property type="evidence" value="ECO:0007669"/>
    <property type="project" value="Ensembl"/>
</dbReference>
<dbReference type="GO" id="GO:0001916">
    <property type="term" value="P:positive regulation of T cell mediated cytotoxicity"/>
    <property type="evidence" value="ECO:0007669"/>
    <property type="project" value="Ensembl"/>
</dbReference>
<dbReference type="GO" id="GO:0051289">
    <property type="term" value="P:protein homotetramerization"/>
    <property type="evidence" value="ECO:0007669"/>
    <property type="project" value="Ensembl"/>
</dbReference>
<dbReference type="GO" id="GO:0042026">
    <property type="term" value="P:protein refolding"/>
    <property type="evidence" value="ECO:0007669"/>
    <property type="project" value="Ensembl"/>
</dbReference>
<dbReference type="GO" id="GO:0045646">
    <property type="term" value="P:regulation of erythrocyte differentiation"/>
    <property type="evidence" value="ECO:0007669"/>
    <property type="project" value="Ensembl"/>
</dbReference>
<dbReference type="GO" id="GO:0034756">
    <property type="term" value="P:regulation of iron ion transport"/>
    <property type="evidence" value="ECO:0007669"/>
    <property type="project" value="Ensembl"/>
</dbReference>
<dbReference type="GO" id="GO:0002237">
    <property type="term" value="P:response to molecule of bacterial origin"/>
    <property type="evidence" value="ECO:0007669"/>
    <property type="project" value="Ensembl"/>
</dbReference>
<dbReference type="GO" id="GO:0007608">
    <property type="term" value="P:sensory perception of smell"/>
    <property type="evidence" value="ECO:0007669"/>
    <property type="project" value="Ensembl"/>
</dbReference>
<dbReference type="GO" id="GO:0033077">
    <property type="term" value="P:T cell differentiation in thymus"/>
    <property type="evidence" value="ECO:0007669"/>
    <property type="project" value="Ensembl"/>
</dbReference>
<dbReference type="GO" id="GO:0001913">
    <property type="term" value="P:T cell mediated cytotoxicity"/>
    <property type="evidence" value="ECO:0007669"/>
    <property type="project" value="Ensembl"/>
</dbReference>
<dbReference type="CDD" id="cd05770">
    <property type="entry name" value="IgC1_beta2m"/>
    <property type="match status" value="1"/>
</dbReference>
<dbReference type="FunFam" id="2.60.40.10:FF:001005">
    <property type="entry name" value="Beta-2-microglobulin"/>
    <property type="match status" value="1"/>
</dbReference>
<dbReference type="Gene3D" id="2.60.40.10">
    <property type="entry name" value="Immunoglobulins"/>
    <property type="match status" value="1"/>
</dbReference>
<dbReference type="InterPro" id="IPR015707">
    <property type="entry name" value="B2Microglobulin"/>
</dbReference>
<dbReference type="InterPro" id="IPR007110">
    <property type="entry name" value="Ig-like_dom"/>
</dbReference>
<dbReference type="InterPro" id="IPR036179">
    <property type="entry name" value="Ig-like_dom_sf"/>
</dbReference>
<dbReference type="InterPro" id="IPR013783">
    <property type="entry name" value="Ig-like_fold"/>
</dbReference>
<dbReference type="InterPro" id="IPR003006">
    <property type="entry name" value="Ig/MHC_CS"/>
</dbReference>
<dbReference type="InterPro" id="IPR003597">
    <property type="entry name" value="Ig_C1-set"/>
</dbReference>
<dbReference type="InterPro" id="IPR050160">
    <property type="entry name" value="MHC/Immunoglobulin"/>
</dbReference>
<dbReference type="PANTHER" id="PTHR19944:SF62">
    <property type="entry name" value="BETA-2-MICROGLOBULIN"/>
    <property type="match status" value="1"/>
</dbReference>
<dbReference type="PANTHER" id="PTHR19944">
    <property type="entry name" value="MHC CLASS II-RELATED"/>
    <property type="match status" value="1"/>
</dbReference>
<dbReference type="Pfam" id="PF07654">
    <property type="entry name" value="C1-set"/>
    <property type="match status" value="1"/>
</dbReference>
<dbReference type="SMART" id="SM00407">
    <property type="entry name" value="IGc1"/>
    <property type="match status" value="1"/>
</dbReference>
<dbReference type="SUPFAM" id="SSF48726">
    <property type="entry name" value="Immunoglobulin"/>
    <property type="match status" value="1"/>
</dbReference>
<dbReference type="PROSITE" id="PS50835">
    <property type="entry name" value="IG_LIKE"/>
    <property type="match status" value="1"/>
</dbReference>
<dbReference type="PROSITE" id="PS00290">
    <property type="entry name" value="IG_MHC"/>
    <property type="match status" value="1"/>
</dbReference>
<organism>
    <name type="scientific">Gorilla gorilla gorilla</name>
    <name type="common">Western lowland gorilla</name>
    <dbReference type="NCBI Taxonomy" id="9595"/>
    <lineage>
        <taxon>Eukaryota</taxon>
        <taxon>Metazoa</taxon>
        <taxon>Chordata</taxon>
        <taxon>Craniata</taxon>
        <taxon>Vertebrata</taxon>
        <taxon>Euteleostomi</taxon>
        <taxon>Mammalia</taxon>
        <taxon>Eutheria</taxon>
        <taxon>Euarchontoglires</taxon>
        <taxon>Primates</taxon>
        <taxon>Haplorrhini</taxon>
        <taxon>Catarrhini</taxon>
        <taxon>Hominidae</taxon>
        <taxon>Gorilla</taxon>
    </lineage>
</organism>
<reference key="1">
    <citation type="journal article" date="1990" name="Immunol. Rev.">
        <title>Comparison of class I MHC alleles in humans and apes.</title>
        <authorList>
            <person name="Lawlor D.A."/>
            <person name="Warren E."/>
            <person name="Ward F.E."/>
            <person name="Parham P."/>
        </authorList>
    </citation>
    <scope>NUCLEOTIDE SEQUENCE [MRNA]</scope>
</reference>